<reference key="1">
    <citation type="journal article" date="2009" name="Appl. Environ. Microbiol.">
        <title>Three genomes from the phylum Acidobacteria provide insight into the lifestyles of these microorganisms in soils.</title>
        <authorList>
            <person name="Ward N.L."/>
            <person name="Challacombe J.F."/>
            <person name="Janssen P.H."/>
            <person name="Henrissat B."/>
            <person name="Coutinho P.M."/>
            <person name="Wu M."/>
            <person name="Xie G."/>
            <person name="Haft D.H."/>
            <person name="Sait M."/>
            <person name="Badger J."/>
            <person name="Barabote R.D."/>
            <person name="Bradley B."/>
            <person name="Brettin T.S."/>
            <person name="Brinkac L.M."/>
            <person name="Bruce D."/>
            <person name="Creasy T."/>
            <person name="Daugherty S.C."/>
            <person name="Davidsen T.M."/>
            <person name="DeBoy R.T."/>
            <person name="Detter J.C."/>
            <person name="Dodson R.J."/>
            <person name="Durkin A.S."/>
            <person name="Ganapathy A."/>
            <person name="Gwinn-Giglio M."/>
            <person name="Han C.S."/>
            <person name="Khouri H."/>
            <person name="Kiss H."/>
            <person name="Kothari S.P."/>
            <person name="Madupu R."/>
            <person name="Nelson K.E."/>
            <person name="Nelson W.C."/>
            <person name="Paulsen I."/>
            <person name="Penn K."/>
            <person name="Ren Q."/>
            <person name="Rosovitz M.J."/>
            <person name="Selengut J.D."/>
            <person name="Shrivastava S."/>
            <person name="Sullivan S.A."/>
            <person name="Tapia R."/>
            <person name="Thompson L.S."/>
            <person name="Watkins K.L."/>
            <person name="Yang Q."/>
            <person name="Yu C."/>
            <person name="Zafar N."/>
            <person name="Zhou L."/>
            <person name="Kuske C.R."/>
        </authorList>
    </citation>
    <scope>NUCLEOTIDE SEQUENCE [LARGE SCALE GENOMIC DNA]</scope>
    <source>
        <strain>ATCC 51196 / DSM 11244 / BCRC 80197 / JCM 7670 / NBRC 15755 / NCIMB 13165 / 161</strain>
    </source>
</reference>
<dbReference type="EC" id="6.3.5.7" evidence="1"/>
<dbReference type="EMBL" id="CP001472">
    <property type="protein sequence ID" value="ACO32096.1"/>
    <property type="molecule type" value="Genomic_DNA"/>
</dbReference>
<dbReference type="SMR" id="C1F857"/>
<dbReference type="STRING" id="240015.ACP_1864"/>
<dbReference type="KEGG" id="aca:ACP_1864"/>
<dbReference type="eggNOG" id="COG0154">
    <property type="taxonomic scope" value="Bacteria"/>
</dbReference>
<dbReference type="HOGENOM" id="CLU_009600_0_3_0"/>
<dbReference type="InParanoid" id="C1F857"/>
<dbReference type="OrthoDB" id="9811471at2"/>
<dbReference type="Proteomes" id="UP000002207">
    <property type="component" value="Chromosome"/>
</dbReference>
<dbReference type="GO" id="GO:0030956">
    <property type="term" value="C:glutamyl-tRNA(Gln) amidotransferase complex"/>
    <property type="evidence" value="ECO:0007669"/>
    <property type="project" value="InterPro"/>
</dbReference>
<dbReference type="GO" id="GO:0005524">
    <property type="term" value="F:ATP binding"/>
    <property type="evidence" value="ECO:0007669"/>
    <property type="project" value="UniProtKB-KW"/>
</dbReference>
<dbReference type="GO" id="GO:0050567">
    <property type="term" value="F:glutaminyl-tRNA synthase (glutamine-hydrolyzing) activity"/>
    <property type="evidence" value="ECO:0007669"/>
    <property type="project" value="UniProtKB-UniRule"/>
</dbReference>
<dbReference type="GO" id="GO:0006412">
    <property type="term" value="P:translation"/>
    <property type="evidence" value="ECO:0007669"/>
    <property type="project" value="UniProtKB-UniRule"/>
</dbReference>
<dbReference type="Gene3D" id="3.90.1300.10">
    <property type="entry name" value="Amidase signature (AS) domain"/>
    <property type="match status" value="1"/>
</dbReference>
<dbReference type="HAMAP" id="MF_00120">
    <property type="entry name" value="GatA"/>
    <property type="match status" value="1"/>
</dbReference>
<dbReference type="InterPro" id="IPR000120">
    <property type="entry name" value="Amidase"/>
</dbReference>
<dbReference type="InterPro" id="IPR020556">
    <property type="entry name" value="Amidase_CS"/>
</dbReference>
<dbReference type="InterPro" id="IPR023631">
    <property type="entry name" value="Amidase_dom"/>
</dbReference>
<dbReference type="InterPro" id="IPR036928">
    <property type="entry name" value="AS_sf"/>
</dbReference>
<dbReference type="InterPro" id="IPR004412">
    <property type="entry name" value="GatA"/>
</dbReference>
<dbReference type="NCBIfam" id="TIGR00132">
    <property type="entry name" value="gatA"/>
    <property type="match status" value="1"/>
</dbReference>
<dbReference type="PANTHER" id="PTHR11895:SF151">
    <property type="entry name" value="GLUTAMYL-TRNA(GLN) AMIDOTRANSFERASE SUBUNIT A"/>
    <property type="match status" value="1"/>
</dbReference>
<dbReference type="PANTHER" id="PTHR11895">
    <property type="entry name" value="TRANSAMIDASE"/>
    <property type="match status" value="1"/>
</dbReference>
<dbReference type="Pfam" id="PF01425">
    <property type="entry name" value="Amidase"/>
    <property type="match status" value="1"/>
</dbReference>
<dbReference type="SUPFAM" id="SSF75304">
    <property type="entry name" value="Amidase signature (AS) enzymes"/>
    <property type="match status" value="1"/>
</dbReference>
<dbReference type="PROSITE" id="PS00571">
    <property type="entry name" value="AMIDASES"/>
    <property type="match status" value="1"/>
</dbReference>
<organism>
    <name type="scientific">Acidobacterium capsulatum (strain ATCC 51196 / DSM 11244 / BCRC 80197 / JCM 7670 / NBRC 15755 / NCIMB 13165 / 161)</name>
    <dbReference type="NCBI Taxonomy" id="240015"/>
    <lineage>
        <taxon>Bacteria</taxon>
        <taxon>Pseudomonadati</taxon>
        <taxon>Acidobacteriota</taxon>
        <taxon>Terriglobia</taxon>
        <taxon>Terriglobales</taxon>
        <taxon>Acidobacteriaceae</taxon>
        <taxon>Acidobacterium</taxon>
    </lineage>
</organism>
<protein>
    <recommendedName>
        <fullName evidence="1">Glutamyl-tRNA(Gln) amidotransferase subunit A</fullName>
        <shortName evidence="1">Glu-ADT subunit A</shortName>
        <ecNumber evidence="1">6.3.5.7</ecNumber>
    </recommendedName>
</protein>
<comment type="function">
    <text evidence="1">Allows the formation of correctly charged Gln-tRNA(Gln) through the transamidation of misacylated Glu-tRNA(Gln) in organisms which lack glutaminyl-tRNA synthetase. The reaction takes place in the presence of glutamine and ATP through an activated gamma-phospho-Glu-tRNA(Gln).</text>
</comment>
<comment type="catalytic activity">
    <reaction evidence="1">
        <text>L-glutamyl-tRNA(Gln) + L-glutamine + ATP + H2O = L-glutaminyl-tRNA(Gln) + L-glutamate + ADP + phosphate + H(+)</text>
        <dbReference type="Rhea" id="RHEA:17521"/>
        <dbReference type="Rhea" id="RHEA-COMP:9681"/>
        <dbReference type="Rhea" id="RHEA-COMP:9684"/>
        <dbReference type="ChEBI" id="CHEBI:15377"/>
        <dbReference type="ChEBI" id="CHEBI:15378"/>
        <dbReference type="ChEBI" id="CHEBI:29985"/>
        <dbReference type="ChEBI" id="CHEBI:30616"/>
        <dbReference type="ChEBI" id="CHEBI:43474"/>
        <dbReference type="ChEBI" id="CHEBI:58359"/>
        <dbReference type="ChEBI" id="CHEBI:78520"/>
        <dbReference type="ChEBI" id="CHEBI:78521"/>
        <dbReference type="ChEBI" id="CHEBI:456216"/>
        <dbReference type="EC" id="6.3.5.7"/>
    </reaction>
</comment>
<comment type="subunit">
    <text evidence="1">Heterotrimer of A, B and C subunits.</text>
</comment>
<comment type="similarity">
    <text evidence="1">Belongs to the amidase family. GatA subfamily.</text>
</comment>
<accession>C1F857</accession>
<name>GATA_ACIC5</name>
<sequence>MEFQTTLPSIRAVRTGEVRAEAALQECLGAIDAHNGEVNAYLSLDRDGAGARARHIDALSREERAKLPMGGVPFGIKDVLTVEGMPATASSKILEGYRPPYTATAVQRLIDAGAVLVGKLNCDEFAMGSSNENSAYGPVKNPRALDRVPGGSSGGSAAAVAANMAVATLGTDTGGSIRQPASFCGVVGVLPTYGRVSRYGLIAFASSLDRVGPFAHTVRDAAEVLGVIAGHDPMDATSSSVPVPDYTEKLDAGVKGLRLGVPAEYFAEGLDPEVKRAVEGTIEQLRAAGAEVKPISLPHTPYAIPTYYVIATAEASANLARFDGVRYGLRAPEANTLAAMYRQTRDLGFGAEVKRRILLGTYVLSAGYYDAYYKKAQQVRRLLAQDFLRAFEEVDAIVTPTAPTPAFKLGEKSDDPLSMYLADIYTVTANLAGICGASVPCGTSREGLPIGIQILGRHFDEATVLRVGQAVESLQK</sequence>
<feature type="chain" id="PRO_1000122459" description="Glutamyl-tRNA(Gln) amidotransferase subunit A">
    <location>
        <begin position="1"/>
        <end position="476"/>
    </location>
</feature>
<feature type="active site" description="Charge relay system" evidence="1">
    <location>
        <position position="77"/>
    </location>
</feature>
<feature type="active site" description="Charge relay system" evidence="1">
    <location>
        <position position="152"/>
    </location>
</feature>
<feature type="active site" description="Acyl-ester intermediate" evidence="1">
    <location>
        <position position="176"/>
    </location>
</feature>
<gene>
    <name evidence="1" type="primary">gatA</name>
    <name type="ordered locus">ACP_1864</name>
</gene>
<evidence type="ECO:0000255" key="1">
    <source>
        <dbReference type="HAMAP-Rule" id="MF_00120"/>
    </source>
</evidence>
<proteinExistence type="inferred from homology"/>
<keyword id="KW-0067">ATP-binding</keyword>
<keyword id="KW-0436">Ligase</keyword>
<keyword id="KW-0547">Nucleotide-binding</keyword>
<keyword id="KW-0648">Protein biosynthesis</keyword>
<keyword id="KW-1185">Reference proteome</keyword>